<accession>B9MKC6</accession>
<reference key="1">
    <citation type="submission" date="2009-01" db="EMBL/GenBank/DDBJ databases">
        <title>Complete sequence of chromosome of Caldicellulosiruptor becscii DSM 6725.</title>
        <authorList>
            <person name="Lucas S."/>
            <person name="Copeland A."/>
            <person name="Lapidus A."/>
            <person name="Glavina del Rio T."/>
            <person name="Tice H."/>
            <person name="Bruce D."/>
            <person name="Goodwin L."/>
            <person name="Pitluck S."/>
            <person name="Sims D."/>
            <person name="Meincke L."/>
            <person name="Brettin T."/>
            <person name="Detter J.C."/>
            <person name="Han C."/>
            <person name="Larimer F."/>
            <person name="Land M."/>
            <person name="Hauser L."/>
            <person name="Kyrpides N."/>
            <person name="Ovchinnikova G."/>
            <person name="Kataeva I."/>
            <person name="Adams M.W.W."/>
        </authorList>
    </citation>
    <scope>NUCLEOTIDE SEQUENCE [LARGE SCALE GENOMIC DNA]</scope>
    <source>
        <strain>ATCC BAA-1888 / DSM 6725 / KCTC 15123 / Z-1320</strain>
    </source>
</reference>
<keyword id="KW-0028">Amino-acid biosynthesis</keyword>
<keyword id="KW-0057">Aromatic amino acid biosynthesis</keyword>
<keyword id="KW-0456">Lyase</keyword>
<keyword id="KW-0822">Tryptophan biosynthesis</keyword>
<proteinExistence type="inferred from homology"/>
<evidence type="ECO:0000255" key="1">
    <source>
        <dbReference type="HAMAP-Rule" id="MF_00131"/>
    </source>
</evidence>
<organism>
    <name type="scientific">Caldicellulosiruptor bescii (strain ATCC BAA-1888 / DSM 6725 / KCTC 15123 / Z-1320)</name>
    <name type="common">Anaerocellum thermophilum</name>
    <dbReference type="NCBI Taxonomy" id="521460"/>
    <lineage>
        <taxon>Bacteria</taxon>
        <taxon>Bacillati</taxon>
        <taxon>Bacillota</taxon>
        <taxon>Bacillota incertae sedis</taxon>
        <taxon>Caldicellulosiruptorales</taxon>
        <taxon>Caldicellulosiruptoraceae</taxon>
        <taxon>Caldicellulosiruptor</taxon>
    </lineage>
</organism>
<feature type="chain" id="PRO_1000198697" description="Tryptophan synthase alpha chain">
    <location>
        <begin position="1"/>
        <end position="256"/>
    </location>
</feature>
<feature type="active site" description="Proton acceptor" evidence="1">
    <location>
        <position position="48"/>
    </location>
</feature>
<feature type="active site" description="Proton acceptor" evidence="1">
    <location>
        <position position="59"/>
    </location>
</feature>
<comment type="function">
    <text evidence="1">The alpha subunit is responsible for the aldol cleavage of indoleglycerol phosphate to indole and glyceraldehyde 3-phosphate.</text>
</comment>
<comment type="catalytic activity">
    <reaction evidence="1">
        <text>(1S,2R)-1-C-(indol-3-yl)glycerol 3-phosphate + L-serine = D-glyceraldehyde 3-phosphate + L-tryptophan + H2O</text>
        <dbReference type="Rhea" id="RHEA:10532"/>
        <dbReference type="ChEBI" id="CHEBI:15377"/>
        <dbReference type="ChEBI" id="CHEBI:33384"/>
        <dbReference type="ChEBI" id="CHEBI:57912"/>
        <dbReference type="ChEBI" id="CHEBI:58866"/>
        <dbReference type="ChEBI" id="CHEBI:59776"/>
        <dbReference type="EC" id="4.2.1.20"/>
    </reaction>
</comment>
<comment type="pathway">
    <text evidence="1">Amino-acid biosynthesis; L-tryptophan biosynthesis; L-tryptophan from chorismate: step 5/5.</text>
</comment>
<comment type="subunit">
    <text evidence="1">Tetramer of two alpha and two beta chains.</text>
</comment>
<comment type="similarity">
    <text evidence="1">Belongs to the TrpA family.</text>
</comment>
<name>TRPA_CALBD</name>
<dbReference type="EC" id="4.2.1.20" evidence="1"/>
<dbReference type="EMBL" id="CP001393">
    <property type="protein sequence ID" value="ACM60784.1"/>
    <property type="molecule type" value="Genomic_DNA"/>
</dbReference>
<dbReference type="RefSeq" id="WP_015908114.1">
    <property type="nucleotide sequence ID" value="NC_012034.1"/>
</dbReference>
<dbReference type="SMR" id="B9MKC6"/>
<dbReference type="STRING" id="521460.Athe_1690"/>
<dbReference type="GeneID" id="31773040"/>
<dbReference type="KEGG" id="ate:Athe_1690"/>
<dbReference type="eggNOG" id="COG0159">
    <property type="taxonomic scope" value="Bacteria"/>
</dbReference>
<dbReference type="HOGENOM" id="CLU_016734_0_0_9"/>
<dbReference type="UniPathway" id="UPA00035">
    <property type="reaction ID" value="UER00044"/>
</dbReference>
<dbReference type="Proteomes" id="UP000007723">
    <property type="component" value="Chromosome"/>
</dbReference>
<dbReference type="GO" id="GO:0005829">
    <property type="term" value="C:cytosol"/>
    <property type="evidence" value="ECO:0007669"/>
    <property type="project" value="TreeGrafter"/>
</dbReference>
<dbReference type="GO" id="GO:0004834">
    <property type="term" value="F:tryptophan synthase activity"/>
    <property type="evidence" value="ECO:0007669"/>
    <property type="project" value="UniProtKB-UniRule"/>
</dbReference>
<dbReference type="CDD" id="cd04724">
    <property type="entry name" value="Tryptophan_synthase_alpha"/>
    <property type="match status" value="1"/>
</dbReference>
<dbReference type="FunFam" id="3.20.20.70:FF:000037">
    <property type="entry name" value="Tryptophan synthase alpha chain"/>
    <property type="match status" value="1"/>
</dbReference>
<dbReference type="Gene3D" id="3.20.20.70">
    <property type="entry name" value="Aldolase class I"/>
    <property type="match status" value="1"/>
</dbReference>
<dbReference type="HAMAP" id="MF_00131">
    <property type="entry name" value="Trp_synth_alpha"/>
    <property type="match status" value="1"/>
</dbReference>
<dbReference type="InterPro" id="IPR013785">
    <property type="entry name" value="Aldolase_TIM"/>
</dbReference>
<dbReference type="InterPro" id="IPR011060">
    <property type="entry name" value="RibuloseP-bd_barrel"/>
</dbReference>
<dbReference type="InterPro" id="IPR018204">
    <property type="entry name" value="Trp_synthase_alpha_AS"/>
</dbReference>
<dbReference type="InterPro" id="IPR002028">
    <property type="entry name" value="Trp_synthase_suA"/>
</dbReference>
<dbReference type="NCBIfam" id="TIGR00262">
    <property type="entry name" value="trpA"/>
    <property type="match status" value="1"/>
</dbReference>
<dbReference type="PANTHER" id="PTHR43406:SF1">
    <property type="entry name" value="TRYPTOPHAN SYNTHASE ALPHA CHAIN, CHLOROPLASTIC"/>
    <property type="match status" value="1"/>
</dbReference>
<dbReference type="PANTHER" id="PTHR43406">
    <property type="entry name" value="TRYPTOPHAN SYNTHASE, ALPHA CHAIN"/>
    <property type="match status" value="1"/>
</dbReference>
<dbReference type="Pfam" id="PF00290">
    <property type="entry name" value="Trp_syntA"/>
    <property type="match status" value="1"/>
</dbReference>
<dbReference type="SUPFAM" id="SSF51366">
    <property type="entry name" value="Ribulose-phoshate binding barrel"/>
    <property type="match status" value="1"/>
</dbReference>
<dbReference type="PROSITE" id="PS00167">
    <property type="entry name" value="TRP_SYNTHASE_ALPHA"/>
    <property type="match status" value="1"/>
</dbReference>
<sequence>MNFIDERFERLKKEGKKAFIGYVTFGYPTFEETLWFIKLVYSYVDILEIGFPFSDPIADGEIIQKASIKALSEGVKLSHLFESIEKFKKDKPVVLMLYANTVYKRGIDRFFESCKACGVDGVIIPDVSFEESFEFKEVAEKFGIVYIDLVSISSLERAKMIGRQSRGFLYCVSRKGVTGFKGQIDDRIFTFLKELKTVTSTPLAVGFGIKSKEDVQKFKDLADGIVIGSAIITKIDEGKDKLEDFLKEISESLKDK</sequence>
<gene>
    <name evidence="1" type="primary">trpA</name>
    <name type="ordered locus">Athe_1690</name>
</gene>
<protein>
    <recommendedName>
        <fullName evidence="1">Tryptophan synthase alpha chain</fullName>
        <ecNumber evidence="1">4.2.1.20</ecNumber>
    </recommendedName>
</protein>